<proteinExistence type="inferred from homology"/>
<sequence length="466" mass="50625">MNGGTFTPGKEKERAGIYFNFKTTAENRVSAGERGTVALPIASSWGEVKKFISISSIEDLNKKVGLNIDDPSLLLLREAMKKANTVLLYRLTEGLRASADISEGVKATALYGGTKGNDIIISITENVIDSSKVDVTTYLDQSEVDKQTVSKAEELKPNKYVTFTGKGDLTVTIPLTGTAPEDVSGALPATSGIRLSGGTDKTPTNADYTAFLEAAETEYFDTIALPVEDNEQLKATFVAFIKRLRDNQGQKVQGVLSNYKGDHEGIINVTGGVLLEDGTEITPEKATAWVAGASAGATFNQSLTFVEYEGAVDVLNRIDNDEIVERLSNGEFLFTYDSRDKSVSVEKDINSLTSLTAEKNKMFQKNKIVRVLDAINNDLTSQLKALIKSRKASGSDVPATNDGLQFVKTLITQYLSVLQDNEGITDFDSENDITIALNNDRDGFLIDLAVQPVDAAEKFYFNVEVK</sequence>
<organism>
    <name type="scientific">Bacillus subtilis (strain 168)</name>
    <dbReference type="NCBI Taxonomy" id="224308"/>
    <lineage>
        <taxon>Bacteria</taxon>
        <taxon>Bacillati</taxon>
        <taxon>Bacillota</taxon>
        <taxon>Bacilli</taxon>
        <taxon>Bacillales</taxon>
        <taxon>Bacillaceae</taxon>
        <taxon>Bacillus</taxon>
    </lineage>
</organism>
<dbReference type="EMBL" id="D32216">
    <property type="protein sequence ID" value="BAA06943.1"/>
    <property type="status" value="ALT_FRAME"/>
    <property type="molecule type" value="Genomic_DNA"/>
</dbReference>
<dbReference type="EMBL" id="D32216">
    <property type="protein sequence ID" value="BAA06944.1"/>
    <property type="status" value="ALT_FRAME"/>
    <property type="molecule type" value="Genomic_DNA"/>
</dbReference>
<dbReference type="EMBL" id="D84432">
    <property type="protein sequence ID" value="BAA12406.1"/>
    <property type="status" value="ALT_FRAME"/>
    <property type="molecule type" value="Genomic_DNA"/>
</dbReference>
<dbReference type="EMBL" id="D84432">
    <property type="protein sequence ID" value="BAA12407.1"/>
    <property type="status" value="ALT_FRAME"/>
    <property type="molecule type" value="Genomic_DNA"/>
</dbReference>
<dbReference type="EMBL" id="AL009126">
    <property type="protein sequence ID" value="CAB14549.2"/>
    <property type="molecule type" value="Genomic_DNA"/>
</dbReference>
<dbReference type="PIR" id="F69947">
    <property type="entry name" value="F69947"/>
</dbReference>
<dbReference type="PIR" id="G69947">
    <property type="entry name" value="G69947"/>
</dbReference>
<dbReference type="RefSeq" id="NP_390485.2">
    <property type="nucleotide sequence ID" value="NC_000964.3"/>
</dbReference>
<dbReference type="RefSeq" id="WP_003229929.1">
    <property type="nucleotide sequence ID" value="NZ_OZ025638.1"/>
</dbReference>
<dbReference type="SMR" id="P45927"/>
<dbReference type="FunCoup" id="P45927">
    <property type="interactions" value="27"/>
</dbReference>
<dbReference type="STRING" id="224308.BSU26075"/>
<dbReference type="PaxDb" id="224308-BSU26075"/>
<dbReference type="EnsemblBacteria" id="CAB14549">
    <property type="protein sequence ID" value="CAB14549"/>
    <property type="gene ID" value="BSU_26075"/>
</dbReference>
<dbReference type="GeneID" id="937738"/>
<dbReference type="KEGG" id="bsu:BSU26075"/>
<dbReference type="PATRIC" id="fig|224308.179.peg.2833"/>
<dbReference type="eggNOG" id="ENOG502Z8I6">
    <property type="taxonomic scope" value="Bacteria"/>
</dbReference>
<dbReference type="InParanoid" id="P45927"/>
<dbReference type="OrthoDB" id="89060at2"/>
<dbReference type="PhylomeDB" id="P45927"/>
<dbReference type="BioCyc" id="BSUB:BSU26075-MONOMER"/>
<dbReference type="Proteomes" id="UP000001570">
    <property type="component" value="Chromosome"/>
</dbReference>
<dbReference type="Gene3D" id="2.60.40.4290">
    <property type="match status" value="1"/>
</dbReference>
<dbReference type="Gene3D" id="3.30.1370.220">
    <property type="match status" value="1"/>
</dbReference>
<dbReference type="Gene3D" id="3.30.1490.360">
    <property type="match status" value="1"/>
</dbReference>
<dbReference type="Gene3D" id="3.30.360.90">
    <property type="match status" value="1"/>
</dbReference>
<dbReference type="Gene3D" id="3.40.50.11790">
    <property type="match status" value="1"/>
</dbReference>
<dbReference type="InterPro" id="IPR054564">
    <property type="entry name" value="Gp18_domIII_N"/>
</dbReference>
<dbReference type="InterPro" id="IPR035326">
    <property type="entry name" value="Phage_sheath-like_beta"/>
</dbReference>
<dbReference type="InterPro" id="IPR035089">
    <property type="entry name" value="Phage_sheath_subtilisin"/>
</dbReference>
<dbReference type="InterPro" id="IPR020287">
    <property type="entry name" value="Tail_sheath_C"/>
</dbReference>
<dbReference type="Pfam" id="PF22671">
    <property type="entry name" value="Gp18_domIII_N"/>
    <property type="match status" value="1"/>
</dbReference>
<dbReference type="Pfam" id="PF04984">
    <property type="entry name" value="Phage_sheath_1"/>
    <property type="match status" value="1"/>
</dbReference>
<dbReference type="Pfam" id="PF17482">
    <property type="entry name" value="Phage_sheath_1C"/>
    <property type="match status" value="1"/>
</dbReference>
<dbReference type="Pfam" id="PF17481">
    <property type="entry name" value="Phage_sheath_domII"/>
    <property type="match status" value="1"/>
</dbReference>
<evidence type="ECO:0000305" key="1"/>
<protein>
    <recommendedName>
        <fullName>Uncharacterized protein YqbK</fullName>
    </recommendedName>
</protein>
<feature type="chain" id="PRO_0000049762" description="Uncharacterized protein YqbK">
    <location>
        <begin position="1"/>
        <end position="466"/>
    </location>
</feature>
<accession>P45927</accession>
<accession>P45928</accession>
<reference key="1">
    <citation type="journal article" date="1995" name="Microbiology">
        <title>Complete nucleotide sequence of a skin element excised by DNA rearrangement during sporulation in Bacillus subtilis.</title>
        <authorList>
            <person name="Takemaru K."/>
            <person name="Mizuno M."/>
            <person name="Sato T."/>
            <person name="Takeuchi M."/>
            <person name="Kobayashi Y."/>
        </authorList>
    </citation>
    <scope>NUCLEOTIDE SEQUENCE [GENOMIC DNA]</scope>
    <source>
        <strain>168 / JH642</strain>
    </source>
</reference>
<reference key="2">
    <citation type="journal article" date="1996" name="Microbiology">
        <title>Systematic sequencing of the 283 kb 210 degrees-232 degrees region of the Bacillus subtilis genome containing the skin element and many sporulation genes.</title>
        <authorList>
            <person name="Mizuno M."/>
            <person name="Masuda S."/>
            <person name="Takemaru K."/>
            <person name="Hosono S."/>
            <person name="Sato T."/>
            <person name="Takeuchi M."/>
            <person name="Kobayashi Y."/>
        </authorList>
    </citation>
    <scope>NUCLEOTIDE SEQUENCE [GENOMIC DNA]</scope>
    <source>
        <strain>168 / JH642</strain>
    </source>
</reference>
<reference key="3">
    <citation type="journal article" date="1997" name="Nature">
        <title>The complete genome sequence of the Gram-positive bacterium Bacillus subtilis.</title>
        <authorList>
            <person name="Kunst F."/>
            <person name="Ogasawara N."/>
            <person name="Moszer I."/>
            <person name="Albertini A.M."/>
            <person name="Alloni G."/>
            <person name="Azevedo V."/>
            <person name="Bertero M.G."/>
            <person name="Bessieres P."/>
            <person name="Bolotin A."/>
            <person name="Borchert S."/>
            <person name="Borriss R."/>
            <person name="Boursier L."/>
            <person name="Brans A."/>
            <person name="Braun M."/>
            <person name="Brignell S.C."/>
            <person name="Bron S."/>
            <person name="Brouillet S."/>
            <person name="Bruschi C.V."/>
            <person name="Caldwell B."/>
            <person name="Capuano V."/>
            <person name="Carter N.M."/>
            <person name="Choi S.-K."/>
            <person name="Codani J.-J."/>
            <person name="Connerton I.F."/>
            <person name="Cummings N.J."/>
            <person name="Daniel R.A."/>
            <person name="Denizot F."/>
            <person name="Devine K.M."/>
            <person name="Duesterhoeft A."/>
            <person name="Ehrlich S.D."/>
            <person name="Emmerson P.T."/>
            <person name="Entian K.-D."/>
            <person name="Errington J."/>
            <person name="Fabret C."/>
            <person name="Ferrari E."/>
            <person name="Foulger D."/>
            <person name="Fritz C."/>
            <person name="Fujita M."/>
            <person name="Fujita Y."/>
            <person name="Fuma S."/>
            <person name="Galizzi A."/>
            <person name="Galleron N."/>
            <person name="Ghim S.-Y."/>
            <person name="Glaser P."/>
            <person name="Goffeau A."/>
            <person name="Golightly E.J."/>
            <person name="Grandi G."/>
            <person name="Guiseppi G."/>
            <person name="Guy B.J."/>
            <person name="Haga K."/>
            <person name="Haiech J."/>
            <person name="Harwood C.R."/>
            <person name="Henaut A."/>
            <person name="Hilbert H."/>
            <person name="Holsappel S."/>
            <person name="Hosono S."/>
            <person name="Hullo M.-F."/>
            <person name="Itaya M."/>
            <person name="Jones L.-M."/>
            <person name="Joris B."/>
            <person name="Karamata D."/>
            <person name="Kasahara Y."/>
            <person name="Klaerr-Blanchard M."/>
            <person name="Klein C."/>
            <person name="Kobayashi Y."/>
            <person name="Koetter P."/>
            <person name="Koningstein G."/>
            <person name="Krogh S."/>
            <person name="Kumano M."/>
            <person name="Kurita K."/>
            <person name="Lapidus A."/>
            <person name="Lardinois S."/>
            <person name="Lauber J."/>
            <person name="Lazarevic V."/>
            <person name="Lee S.-M."/>
            <person name="Levine A."/>
            <person name="Liu H."/>
            <person name="Masuda S."/>
            <person name="Mauel C."/>
            <person name="Medigue C."/>
            <person name="Medina N."/>
            <person name="Mellado R.P."/>
            <person name="Mizuno M."/>
            <person name="Moestl D."/>
            <person name="Nakai S."/>
            <person name="Noback M."/>
            <person name="Noone D."/>
            <person name="O'Reilly M."/>
            <person name="Ogawa K."/>
            <person name="Ogiwara A."/>
            <person name="Oudega B."/>
            <person name="Park S.-H."/>
            <person name="Parro V."/>
            <person name="Pohl T.M."/>
            <person name="Portetelle D."/>
            <person name="Porwollik S."/>
            <person name="Prescott A.M."/>
            <person name="Presecan E."/>
            <person name="Pujic P."/>
            <person name="Purnelle B."/>
            <person name="Rapoport G."/>
            <person name="Rey M."/>
            <person name="Reynolds S."/>
            <person name="Rieger M."/>
            <person name="Rivolta C."/>
            <person name="Rocha E."/>
            <person name="Roche B."/>
            <person name="Rose M."/>
            <person name="Sadaie Y."/>
            <person name="Sato T."/>
            <person name="Scanlan E."/>
            <person name="Schleich S."/>
            <person name="Schroeter R."/>
            <person name="Scoffone F."/>
            <person name="Sekiguchi J."/>
            <person name="Sekowska A."/>
            <person name="Seror S.J."/>
            <person name="Serror P."/>
            <person name="Shin B.-S."/>
            <person name="Soldo B."/>
            <person name="Sorokin A."/>
            <person name="Tacconi E."/>
            <person name="Takagi T."/>
            <person name="Takahashi H."/>
            <person name="Takemaru K."/>
            <person name="Takeuchi M."/>
            <person name="Tamakoshi A."/>
            <person name="Tanaka T."/>
            <person name="Terpstra P."/>
            <person name="Tognoni A."/>
            <person name="Tosato V."/>
            <person name="Uchiyama S."/>
            <person name="Vandenbol M."/>
            <person name="Vannier F."/>
            <person name="Vassarotti A."/>
            <person name="Viari A."/>
            <person name="Wambutt R."/>
            <person name="Wedler E."/>
            <person name="Wedler H."/>
            <person name="Weitzenegger T."/>
            <person name="Winters P."/>
            <person name="Wipat A."/>
            <person name="Yamamoto H."/>
            <person name="Yamane K."/>
            <person name="Yasumoto K."/>
            <person name="Yata K."/>
            <person name="Yoshida K."/>
            <person name="Yoshikawa H.-F."/>
            <person name="Zumstein E."/>
            <person name="Yoshikawa H."/>
            <person name="Danchin A."/>
        </authorList>
    </citation>
    <scope>NUCLEOTIDE SEQUENCE [LARGE SCALE GENOMIC DNA]</scope>
    <source>
        <strain>168</strain>
    </source>
</reference>
<reference key="4">
    <citation type="journal article" date="2009" name="Microbiology">
        <title>From a consortium sequence to a unified sequence: the Bacillus subtilis 168 reference genome a decade later.</title>
        <authorList>
            <person name="Barbe V."/>
            <person name="Cruveiller S."/>
            <person name="Kunst F."/>
            <person name="Lenoble P."/>
            <person name="Meurice G."/>
            <person name="Sekowska A."/>
            <person name="Vallenet D."/>
            <person name="Wang T."/>
            <person name="Moszer I."/>
            <person name="Medigue C."/>
            <person name="Danchin A."/>
        </authorList>
    </citation>
    <scope>SEQUENCE REVISION TO C-TERMINUS</scope>
</reference>
<reference key="5">
    <citation type="journal article" date="1995" name="Gene">
        <title>Analysis of a Bacillus subtilis genome fragment using a co-operative computer system prototype.</title>
        <authorList>
            <person name="Medigue C."/>
            <person name="Moszer I."/>
            <person name="Viari A."/>
            <person name="Danchin A."/>
        </authorList>
    </citation>
    <scope>IDENTIFICATION</scope>
</reference>
<keyword id="KW-1185">Reference proteome</keyword>
<comment type="similarity">
    <text evidence="1">Belongs to the myoviridae tail sheath protein family.</text>
</comment>
<comment type="sequence caution" evidence="1">
    <conflict type="frameshift">
        <sequence resource="EMBL-CDS" id="BAA06943"/>
    </conflict>
</comment>
<comment type="sequence caution" evidence="1">
    <conflict type="frameshift">
        <sequence resource="EMBL-CDS" id="BAA06944"/>
    </conflict>
</comment>
<comment type="sequence caution" evidence="1">
    <conflict type="frameshift">
        <sequence resource="EMBL-CDS" id="BAA12406"/>
    </conflict>
</comment>
<comment type="sequence caution" evidence="1">
    <conflict type="frameshift">
        <sequence resource="EMBL-CDS" id="BAA12407"/>
    </conflict>
</comment>
<gene>
    <name type="primary">yqbK</name>
    <name type="synonym">yqbL</name>
    <name type="ordered locus">BSU26080</name>
    <name type="ORF">BSU26070</name>
</gene>
<name>YQBK_BACSU</name>